<reference key="1">
    <citation type="journal article" date="2009" name="PLoS ONE">
        <title>Salmonella paratyphi C: genetic divergence from Salmonella choleraesuis and pathogenic convergence with Salmonella typhi.</title>
        <authorList>
            <person name="Liu W.-Q."/>
            <person name="Feng Y."/>
            <person name="Wang Y."/>
            <person name="Zou Q.-H."/>
            <person name="Chen F."/>
            <person name="Guo J.-T."/>
            <person name="Peng Y.-H."/>
            <person name="Jin Y."/>
            <person name="Li Y.-G."/>
            <person name="Hu S.-N."/>
            <person name="Johnston R.N."/>
            <person name="Liu G.-R."/>
            <person name="Liu S.-L."/>
        </authorList>
    </citation>
    <scope>NUCLEOTIDE SEQUENCE [LARGE SCALE GENOMIC DNA]</scope>
    <source>
        <strain>RKS4594</strain>
    </source>
</reference>
<sequence>MLFGFFRNLFRVLYRVRVTGDVQALQGNRVLITPNHVSFIDGMLLALFLPVRPVFAVYTSISQQWYMRWLTPLIDFVPLDPTKPMSIKHLVRLVEQGRPVVIFPEGRISVTGSLMKIYDGAGFVAAKSGATVIPLRIDGAELTPFSRLKGLVKRRLFPRIQLHILPPTQIPMPEAPRARDRRKIAGEMLHQIMMEARMAVRPRETLYESLLAAQYRYGAGKNCIEDINFTPDTYRKLLTKTLFVGRILEKYSVEGEKIGLMLPNAAISAAVIFGAVSRRRIPAMMNYTAGVKGLTSAITAAEIKTIFTSRQFLDKGKLWHLPEQLTQVRWVYLEDLKADVTPADKLWIFAHLLAPRLAQVKQQPEDEAIILFTSGSEGHPKGVVHSHKSILANVEQIKTIADFTANDRFMSALPLFHSFGLTVGLFTPLLTGAEVFLYPSPLHYRIVPELVYDRNCTVLFGTSTFLGNYARFANPYDFYRLRYVVAGAEKLQESTKQLWQDKFGLRILEGYGVTECAPVVSINVPMAAKPGTVGRILPGMDARLLAVPGIENGGRLQLKGPNIMNGYLRVEKPGVLEVPSAENARGETERGWYDTGDIVRFDENGFVQIQGRAKRFAKIAGEMVSLEMVEQLALGVSAEKMHATAIKSDASKGEALVLFTTDSELTREKLQHYAREHGIPELAVPRDIRYLKQLPLLGSGKPDFVTLKSWVDAPEQHHE</sequence>
<keyword id="KW-0012">Acyltransferase</keyword>
<keyword id="KW-0067">ATP-binding</keyword>
<keyword id="KW-0997">Cell inner membrane</keyword>
<keyword id="KW-1003">Cell membrane</keyword>
<keyword id="KW-0436">Ligase</keyword>
<keyword id="KW-0472">Membrane</keyword>
<keyword id="KW-0511">Multifunctional enzyme</keyword>
<keyword id="KW-0547">Nucleotide-binding</keyword>
<keyword id="KW-0808">Transferase</keyword>
<keyword id="KW-0812">Transmembrane</keyword>
<keyword id="KW-1133">Transmembrane helix</keyword>
<comment type="function">
    <text evidence="1">Plays a role in lysophospholipid acylation. Transfers fatty acids to the 1-position via an enzyme-bound acyl-ACP intermediate in the presence of ATP and magnesium. Its physiological function is to regenerate phosphatidylethanolamine from 2-acyl-glycero-3-phosphoethanolamine (2-acyl-GPE) formed by transacylation reactions or degradation by phospholipase A1.</text>
</comment>
<comment type="catalytic activity">
    <reaction evidence="1">
        <text>a 2-acyl-sn-glycero-3-phosphoethanolamine + a fatty acyl-[ACP] = a 1,2-diacyl-sn-glycero-3-phosphoethanolamine + holo-[ACP]</text>
        <dbReference type="Rhea" id="RHEA:10304"/>
        <dbReference type="Rhea" id="RHEA-COMP:9685"/>
        <dbReference type="Rhea" id="RHEA-COMP:14125"/>
        <dbReference type="ChEBI" id="CHEBI:64479"/>
        <dbReference type="ChEBI" id="CHEBI:64612"/>
        <dbReference type="ChEBI" id="CHEBI:65213"/>
        <dbReference type="ChEBI" id="CHEBI:138651"/>
        <dbReference type="EC" id="2.3.1.40"/>
    </reaction>
</comment>
<comment type="catalytic activity">
    <reaction evidence="1">
        <text>a long-chain fatty acid + holo-[ACP] + ATP = a long-chain fatty acyl-[ACP] + AMP + diphosphate</text>
        <dbReference type="Rhea" id="RHEA:45588"/>
        <dbReference type="Rhea" id="RHEA-COMP:9685"/>
        <dbReference type="Rhea" id="RHEA-COMP:12682"/>
        <dbReference type="ChEBI" id="CHEBI:30616"/>
        <dbReference type="ChEBI" id="CHEBI:33019"/>
        <dbReference type="ChEBI" id="CHEBI:57560"/>
        <dbReference type="ChEBI" id="CHEBI:64479"/>
        <dbReference type="ChEBI" id="CHEBI:133243"/>
        <dbReference type="ChEBI" id="CHEBI:456215"/>
        <dbReference type="EC" id="6.2.1.20"/>
    </reaction>
</comment>
<comment type="subcellular location">
    <subcellularLocation>
        <location evidence="1">Cell inner membrane</location>
        <topology evidence="1">Multi-pass membrane protein</topology>
    </subcellularLocation>
</comment>
<comment type="similarity">
    <text evidence="1">In the N-terminal section; belongs to the 2-acyl-GPE acetyltransferase family.</text>
</comment>
<comment type="similarity">
    <text evidence="1">In the C-terminal section; belongs to the ATP-dependent AMP-binding enzyme family.</text>
</comment>
<accession>C0PXJ8</accession>
<proteinExistence type="inferred from homology"/>
<feature type="chain" id="PRO_1000164347" description="Bifunctional protein Aas">
    <location>
        <begin position="1"/>
        <end position="719"/>
    </location>
</feature>
<feature type="transmembrane region" description="Helical" evidence="1">
    <location>
        <begin position="258"/>
        <end position="277"/>
    </location>
</feature>
<feature type="transmembrane region" description="Helical" evidence="1">
    <location>
        <begin position="409"/>
        <end position="433"/>
    </location>
</feature>
<feature type="region of interest" description="Acyltransferase">
    <location>
        <begin position="15"/>
        <end position="138"/>
    </location>
</feature>
<feature type="region of interest" description="AMP-binding">
    <location>
        <begin position="233"/>
        <end position="646"/>
    </location>
</feature>
<feature type="active site" evidence="1">
    <location>
        <position position="36"/>
    </location>
</feature>
<dbReference type="EC" id="2.3.1.40" evidence="1"/>
<dbReference type="EC" id="6.2.1.20" evidence="1"/>
<dbReference type="EMBL" id="CP000857">
    <property type="protein sequence ID" value="ACN47156.1"/>
    <property type="molecule type" value="Genomic_DNA"/>
</dbReference>
<dbReference type="RefSeq" id="WP_000896083.1">
    <property type="nucleotide sequence ID" value="NC_012125.1"/>
</dbReference>
<dbReference type="SMR" id="C0PXJ8"/>
<dbReference type="KEGG" id="sei:SPC_3068"/>
<dbReference type="HOGENOM" id="CLU_000022_59_8_6"/>
<dbReference type="Proteomes" id="UP000001599">
    <property type="component" value="Chromosome"/>
</dbReference>
<dbReference type="GO" id="GO:0005886">
    <property type="term" value="C:plasma membrane"/>
    <property type="evidence" value="ECO:0007669"/>
    <property type="project" value="UniProtKB-SubCell"/>
</dbReference>
<dbReference type="GO" id="GO:0008779">
    <property type="term" value="F:acyl-[acyl-carrier-protein]-phospholipid O-acyltransferase activity"/>
    <property type="evidence" value="ECO:0007669"/>
    <property type="project" value="UniProtKB-UniRule"/>
</dbReference>
<dbReference type="GO" id="GO:0005524">
    <property type="term" value="F:ATP binding"/>
    <property type="evidence" value="ECO:0007669"/>
    <property type="project" value="UniProtKB-KW"/>
</dbReference>
<dbReference type="GO" id="GO:0008922">
    <property type="term" value="F:long-chain fatty acid [acyl-carrier-protein] ligase activity"/>
    <property type="evidence" value="ECO:0007669"/>
    <property type="project" value="UniProtKB-UniRule"/>
</dbReference>
<dbReference type="GO" id="GO:0031956">
    <property type="term" value="F:medium-chain fatty acid-CoA ligase activity"/>
    <property type="evidence" value="ECO:0007669"/>
    <property type="project" value="TreeGrafter"/>
</dbReference>
<dbReference type="GO" id="GO:0006631">
    <property type="term" value="P:fatty acid metabolic process"/>
    <property type="evidence" value="ECO:0007669"/>
    <property type="project" value="InterPro"/>
</dbReference>
<dbReference type="GO" id="GO:0008654">
    <property type="term" value="P:phospholipid biosynthetic process"/>
    <property type="evidence" value="ECO:0007669"/>
    <property type="project" value="InterPro"/>
</dbReference>
<dbReference type="CDD" id="cd05909">
    <property type="entry name" value="AAS_C"/>
    <property type="match status" value="1"/>
</dbReference>
<dbReference type="CDD" id="cd07989">
    <property type="entry name" value="LPLAT_AGPAT-like"/>
    <property type="match status" value="1"/>
</dbReference>
<dbReference type="FunFam" id="3.30.300.30:FF:000009">
    <property type="entry name" value="Bifunctional protein Aas"/>
    <property type="match status" value="1"/>
</dbReference>
<dbReference type="FunFam" id="3.40.50.12780:FF:000009">
    <property type="entry name" value="Bifunctional protein Aas"/>
    <property type="match status" value="1"/>
</dbReference>
<dbReference type="Gene3D" id="3.30.300.30">
    <property type="match status" value="1"/>
</dbReference>
<dbReference type="Gene3D" id="3.40.50.12780">
    <property type="entry name" value="N-terminal domain of ligase-like"/>
    <property type="match status" value="1"/>
</dbReference>
<dbReference type="HAMAP" id="MF_01162">
    <property type="entry name" value="Aas"/>
    <property type="match status" value="1"/>
</dbReference>
<dbReference type="InterPro" id="IPR023775">
    <property type="entry name" value="Aas"/>
</dbReference>
<dbReference type="InterPro" id="IPR045851">
    <property type="entry name" value="AMP-bd_C_sf"/>
</dbReference>
<dbReference type="InterPro" id="IPR020845">
    <property type="entry name" value="AMP-binding_CS"/>
</dbReference>
<dbReference type="InterPro" id="IPR000873">
    <property type="entry name" value="AMP-dep_synth/lig_dom"/>
</dbReference>
<dbReference type="InterPro" id="IPR042099">
    <property type="entry name" value="ANL_N_sf"/>
</dbReference>
<dbReference type="InterPro" id="IPR002123">
    <property type="entry name" value="Plipid/glycerol_acylTrfase"/>
</dbReference>
<dbReference type="NCBIfam" id="NF005959">
    <property type="entry name" value="PRK08043.1"/>
    <property type="match status" value="1"/>
</dbReference>
<dbReference type="PANTHER" id="PTHR43201">
    <property type="entry name" value="ACYL-COA SYNTHETASE"/>
    <property type="match status" value="1"/>
</dbReference>
<dbReference type="PANTHER" id="PTHR43201:SF8">
    <property type="entry name" value="ACYL-COA SYNTHETASE FAMILY MEMBER 3"/>
    <property type="match status" value="1"/>
</dbReference>
<dbReference type="Pfam" id="PF01553">
    <property type="entry name" value="Acyltransferase"/>
    <property type="match status" value="1"/>
</dbReference>
<dbReference type="Pfam" id="PF00501">
    <property type="entry name" value="AMP-binding"/>
    <property type="match status" value="1"/>
</dbReference>
<dbReference type="SMART" id="SM00563">
    <property type="entry name" value="PlsC"/>
    <property type="match status" value="1"/>
</dbReference>
<dbReference type="SUPFAM" id="SSF56801">
    <property type="entry name" value="Acetyl-CoA synthetase-like"/>
    <property type="match status" value="1"/>
</dbReference>
<dbReference type="SUPFAM" id="SSF69593">
    <property type="entry name" value="Glycerol-3-phosphate (1)-acyltransferase"/>
    <property type="match status" value="1"/>
</dbReference>
<dbReference type="PROSITE" id="PS00455">
    <property type="entry name" value="AMP_BINDING"/>
    <property type="match status" value="1"/>
</dbReference>
<organism>
    <name type="scientific">Salmonella paratyphi C (strain RKS4594)</name>
    <dbReference type="NCBI Taxonomy" id="476213"/>
    <lineage>
        <taxon>Bacteria</taxon>
        <taxon>Pseudomonadati</taxon>
        <taxon>Pseudomonadota</taxon>
        <taxon>Gammaproteobacteria</taxon>
        <taxon>Enterobacterales</taxon>
        <taxon>Enterobacteriaceae</taxon>
        <taxon>Salmonella</taxon>
    </lineage>
</organism>
<gene>
    <name evidence="1" type="primary">aas</name>
    <name type="ordered locus">SPC_3068</name>
</gene>
<evidence type="ECO:0000255" key="1">
    <source>
        <dbReference type="HAMAP-Rule" id="MF_01162"/>
    </source>
</evidence>
<protein>
    <recommendedName>
        <fullName evidence="1">Bifunctional protein Aas</fullName>
    </recommendedName>
    <domain>
        <recommendedName>
            <fullName evidence="1">2-acylglycerophosphoethanolamine acyltransferase</fullName>
            <ecNumber evidence="1">2.3.1.40</ecNumber>
        </recommendedName>
        <alternativeName>
            <fullName evidence="1">2-acyl-GPE acyltransferase</fullName>
        </alternativeName>
        <alternativeName>
            <fullName evidence="1">Acyl-[acyl-carrier-protein]--phospholipid O-acyltransferase</fullName>
        </alternativeName>
    </domain>
    <domain>
        <recommendedName>
            <fullName evidence="1">Acyl-[acyl-carrier-protein] synthetase</fullName>
            <ecNumber evidence="1">6.2.1.20</ecNumber>
        </recommendedName>
        <alternativeName>
            <fullName evidence="1">Acyl-ACP synthetase</fullName>
        </alternativeName>
        <alternativeName>
            <fullName evidence="1">Long-chain-fatty-acid--[acyl-carrier-protein] ligase</fullName>
        </alternativeName>
    </domain>
</protein>
<name>AAS_SALPC</name>